<organism>
    <name type="scientific">Podospora anserina (strain S / ATCC MYA-4624 / DSM 980 / FGSC 10383)</name>
    <name type="common">Pleurage anserina</name>
    <dbReference type="NCBI Taxonomy" id="515849"/>
    <lineage>
        <taxon>Eukaryota</taxon>
        <taxon>Fungi</taxon>
        <taxon>Dikarya</taxon>
        <taxon>Ascomycota</taxon>
        <taxon>Pezizomycotina</taxon>
        <taxon>Sordariomycetes</taxon>
        <taxon>Sordariomycetidae</taxon>
        <taxon>Sordariales</taxon>
        <taxon>Podosporaceae</taxon>
        <taxon>Podospora</taxon>
        <taxon>Podospora anserina</taxon>
    </lineage>
</organism>
<sequence length="50" mass="5944">MPQLVPFYFVNEITFTFIILAITVYILSKYILPRFVRLFLSRTFISKLLG</sequence>
<proteinExistence type="inferred from homology"/>
<reference key="1">
    <citation type="journal article" date="1990" name="Curr. Genet.">
        <title>The complete DNA sequence of the mitochondrial genome of Podospora anserina.</title>
        <authorList>
            <person name="Cummings D.J."/>
            <person name="McNally K.L."/>
            <person name="Domenico J.M."/>
            <person name="Matsuura E.T."/>
        </authorList>
    </citation>
    <scope>NUCLEOTIDE SEQUENCE [LARGE SCALE GENOMIC DNA]</scope>
    <source>
        <strain>s</strain>
    </source>
</reference>
<keyword id="KW-0066">ATP synthesis</keyword>
<keyword id="KW-0138">CF(0)</keyword>
<keyword id="KW-0375">Hydrogen ion transport</keyword>
<keyword id="KW-0406">Ion transport</keyword>
<keyword id="KW-0472">Membrane</keyword>
<keyword id="KW-0496">Mitochondrion</keyword>
<keyword id="KW-1185">Reference proteome</keyword>
<keyword id="KW-0812">Transmembrane</keyword>
<keyword id="KW-1133">Transmembrane helix</keyword>
<keyword id="KW-0813">Transport</keyword>
<dbReference type="EMBL" id="X55026">
    <property type="protein sequence ID" value="CAA38808.1"/>
    <property type="molecule type" value="Genomic_DNA"/>
</dbReference>
<dbReference type="RefSeq" id="NP_074955.1">
    <property type="nucleotide sequence ID" value="NC_001329.3"/>
</dbReference>
<dbReference type="SMR" id="Q02653"/>
<dbReference type="FunCoup" id="Q02653">
    <property type="interactions" value="81"/>
</dbReference>
<dbReference type="STRING" id="515849.Q02653"/>
<dbReference type="GeneID" id="802492"/>
<dbReference type="KEGG" id="pan:PoanfMp48"/>
<dbReference type="InParanoid" id="Q02653"/>
<dbReference type="Proteomes" id="UP000001197">
    <property type="component" value="Mitochondrion"/>
</dbReference>
<dbReference type="GO" id="GO:0031966">
    <property type="term" value="C:mitochondrial membrane"/>
    <property type="evidence" value="ECO:0007669"/>
    <property type="project" value="UniProtKB-SubCell"/>
</dbReference>
<dbReference type="GO" id="GO:0045259">
    <property type="term" value="C:proton-transporting ATP synthase complex"/>
    <property type="evidence" value="ECO:0007669"/>
    <property type="project" value="UniProtKB-KW"/>
</dbReference>
<dbReference type="GO" id="GO:0046933">
    <property type="term" value="F:proton-transporting ATP synthase activity, rotational mechanism"/>
    <property type="evidence" value="ECO:0007669"/>
    <property type="project" value="TreeGrafter"/>
</dbReference>
<dbReference type="InterPro" id="IPR009230">
    <property type="entry name" value="ATP_synth_su8_fun"/>
</dbReference>
<dbReference type="PANTHER" id="PTHR36101">
    <property type="entry name" value="ATP SYNTHASE PROTEIN 8"/>
    <property type="match status" value="1"/>
</dbReference>
<dbReference type="PANTHER" id="PTHR36101:SF1">
    <property type="entry name" value="ATP SYNTHASE PROTEIN 8"/>
    <property type="match status" value="1"/>
</dbReference>
<dbReference type="Pfam" id="PF05933">
    <property type="entry name" value="Fun_ATP-synt_8"/>
    <property type="match status" value="1"/>
</dbReference>
<name>ATP8_PODAN</name>
<evidence type="ECO:0000250" key="1"/>
<evidence type="ECO:0000255" key="2"/>
<evidence type="ECO:0000305" key="3"/>
<feature type="chain" id="PRO_0000195603" description="ATP synthase protein 8">
    <location>
        <begin position="1"/>
        <end position="50"/>
    </location>
</feature>
<feature type="transmembrane region" description="Helical" evidence="2">
    <location>
        <begin position="13"/>
        <end position="32"/>
    </location>
</feature>
<comment type="function">
    <text evidence="1">Mitochondrial membrane ATP synthase (F(1)F(0) ATP synthase or Complex V) produces ATP from ADP in the presence of a proton gradient across the membrane which is generated by electron transport complexes of the respiratory chain. F-type ATPases consist of two structural domains, F(1) - containing the extramembraneous catalytic core and F(0) - containing the membrane proton channel, linked together by a central stalk and a peripheral stalk. During catalysis, ATP synthesis in the catalytic domain of F(1) is coupled via a rotary mechanism of the central stalk subunits to proton translocation. Part of the complex F(0) domain. Minor subunit located with subunit a in the membrane (By similarity).</text>
</comment>
<comment type="subunit">
    <text evidence="1">F-type ATPases have 2 components, CF(1) - the catalytic core - and CF(0) - the membrane proton channel.</text>
</comment>
<comment type="subcellular location">
    <subcellularLocation>
        <location>Mitochondrion membrane</location>
        <topology>Single-pass membrane protein</topology>
    </subcellularLocation>
</comment>
<comment type="similarity">
    <text evidence="3">Belongs to the ATPase protein 8 family.</text>
</comment>
<accession>Q02653</accession>
<protein>
    <recommendedName>
        <fullName>ATP synthase protein 8</fullName>
    </recommendedName>
    <alternativeName>
        <fullName>A6L</fullName>
    </alternativeName>
    <alternativeName>
        <fullName>F-ATPase subunit 8</fullName>
    </alternativeName>
</protein>
<gene>
    <name type="primary">ATP8</name>
</gene>
<geneLocation type="mitochondrion"/>